<protein>
    <recommendedName>
        <fullName>Cytochrome b</fullName>
    </recommendedName>
    <alternativeName>
        <fullName>Complex III subunit 3</fullName>
    </alternativeName>
    <alternativeName>
        <fullName>Complex III subunit III</fullName>
    </alternativeName>
    <alternativeName>
        <fullName>Cytochrome b-c1 complex subunit 3</fullName>
    </alternativeName>
    <alternativeName>
        <fullName>Ubiquinol-cytochrome-c reductase complex cytochrome b subunit</fullName>
    </alternativeName>
</protein>
<dbReference type="EMBL" id="AF423101">
    <property type="protein sequence ID" value="AAP80169.1"/>
    <property type="molecule type" value="Genomic_DNA"/>
</dbReference>
<dbReference type="GO" id="GO:0005743">
    <property type="term" value="C:mitochondrial inner membrane"/>
    <property type="evidence" value="ECO:0007669"/>
    <property type="project" value="UniProtKB-SubCell"/>
</dbReference>
<dbReference type="GO" id="GO:0045275">
    <property type="term" value="C:respiratory chain complex III"/>
    <property type="evidence" value="ECO:0007669"/>
    <property type="project" value="InterPro"/>
</dbReference>
<dbReference type="GO" id="GO:0046872">
    <property type="term" value="F:metal ion binding"/>
    <property type="evidence" value="ECO:0007669"/>
    <property type="project" value="UniProtKB-KW"/>
</dbReference>
<dbReference type="GO" id="GO:0008121">
    <property type="term" value="F:ubiquinol-cytochrome-c reductase activity"/>
    <property type="evidence" value="ECO:0007669"/>
    <property type="project" value="InterPro"/>
</dbReference>
<dbReference type="GO" id="GO:0006122">
    <property type="term" value="P:mitochondrial electron transport, ubiquinol to cytochrome c"/>
    <property type="evidence" value="ECO:0007669"/>
    <property type="project" value="TreeGrafter"/>
</dbReference>
<dbReference type="CDD" id="cd00290">
    <property type="entry name" value="cytochrome_b_C"/>
    <property type="match status" value="1"/>
</dbReference>
<dbReference type="CDD" id="cd00284">
    <property type="entry name" value="Cytochrome_b_N"/>
    <property type="match status" value="1"/>
</dbReference>
<dbReference type="FunFam" id="1.20.810.10:FF:000002">
    <property type="entry name" value="Cytochrome b"/>
    <property type="match status" value="1"/>
</dbReference>
<dbReference type="Gene3D" id="1.20.810.10">
    <property type="entry name" value="Cytochrome Bc1 Complex, Chain C"/>
    <property type="match status" value="1"/>
</dbReference>
<dbReference type="InterPro" id="IPR005798">
    <property type="entry name" value="Cyt_b/b6_C"/>
</dbReference>
<dbReference type="InterPro" id="IPR036150">
    <property type="entry name" value="Cyt_b/b6_C_sf"/>
</dbReference>
<dbReference type="InterPro" id="IPR005797">
    <property type="entry name" value="Cyt_b/b6_N"/>
</dbReference>
<dbReference type="InterPro" id="IPR027387">
    <property type="entry name" value="Cytb/b6-like_sf"/>
</dbReference>
<dbReference type="InterPro" id="IPR030689">
    <property type="entry name" value="Cytochrome_b"/>
</dbReference>
<dbReference type="InterPro" id="IPR048260">
    <property type="entry name" value="Cytochrome_b_C_euk/bac"/>
</dbReference>
<dbReference type="InterPro" id="IPR048259">
    <property type="entry name" value="Cytochrome_b_N_euk/bac"/>
</dbReference>
<dbReference type="InterPro" id="IPR016174">
    <property type="entry name" value="Di-haem_cyt_TM"/>
</dbReference>
<dbReference type="PANTHER" id="PTHR19271">
    <property type="entry name" value="CYTOCHROME B"/>
    <property type="match status" value="1"/>
</dbReference>
<dbReference type="PANTHER" id="PTHR19271:SF16">
    <property type="entry name" value="CYTOCHROME B"/>
    <property type="match status" value="1"/>
</dbReference>
<dbReference type="Pfam" id="PF00032">
    <property type="entry name" value="Cytochrom_B_C"/>
    <property type="match status" value="1"/>
</dbReference>
<dbReference type="Pfam" id="PF00033">
    <property type="entry name" value="Cytochrome_B"/>
    <property type="match status" value="1"/>
</dbReference>
<dbReference type="PIRSF" id="PIRSF038885">
    <property type="entry name" value="COB"/>
    <property type="match status" value="1"/>
</dbReference>
<dbReference type="SUPFAM" id="SSF81648">
    <property type="entry name" value="a domain/subunit of cytochrome bc1 complex (Ubiquinol-cytochrome c reductase)"/>
    <property type="match status" value="1"/>
</dbReference>
<dbReference type="SUPFAM" id="SSF81342">
    <property type="entry name" value="Transmembrane di-heme cytochromes"/>
    <property type="match status" value="1"/>
</dbReference>
<dbReference type="PROSITE" id="PS51003">
    <property type="entry name" value="CYTB_CTER"/>
    <property type="match status" value="1"/>
</dbReference>
<dbReference type="PROSITE" id="PS51002">
    <property type="entry name" value="CYTB_NTER"/>
    <property type="match status" value="1"/>
</dbReference>
<reference key="1">
    <citation type="journal article" date="2004" name="J. Mammal.">
        <title>Phylogeny of the Lonchophyllini (Chiroptera: Phyllostomidae).</title>
        <authorList>
            <person name="Davalos L.M."/>
            <person name="Jansa S.A."/>
        </authorList>
    </citation>
    <scope>NUCLEOTIDE SEQUENCE [GENOMIC DNA]</scope>
</reference>
<name>CYB_PLAGE</name>
<evidence type="ECO:0000250" key="1"/>
<evidence type="ECO:0000250" key="2">
    <source>
        <dbReference type="UniProtKB" id="P00157"/>
    </source>
</evidence>
<evidence type="ECO:0000255" key="3">
    <source>
        <dbReference type="PROSITE-ProRule" id="PRU00967"/>
    </source>
</evidence>
<evidence type="ECO:0000255" key="4">
    <source>
        <dbReference type="PROSITE-ProRule" id="PRU00968"/>
    </source>
</evidence>
<keyword id="KW-0249">Electron transport</keyword>
<keyword id="KW-0349">Heme</keyword>
<keyword id="KW-0408">Iron</keyword>
<keyword id="KW-0472">Membrane</keyword>
<keyword id="KW-0479">Metal-binding</keyword>
<keyword id="KW-0496">Mitochondrion</keyword>
<keyword id="KW-0999">Mitochondrion inner membrane</keyword>
<keyword id="KW-0679">Respiratory chain</keyword>
<keyword id="KW-0812">Transmembrane</keyword>
<keyword id="KW-1133">Transmembrane helix</keyword>
<keyword id="KW-0813">Transport</keyword>
<keyword id="KW-0830">Ubiquinone</keyword>
<feature type="chain" id="PRO_0000254746" description="Cytochrome b">
    <location>
        <begin position="1"/>
        <end position="379"/>
    </location>
</feature>
<feature type="transmembrane region" description="Helical" evidence="2">
    <location>
        <begin position="33"/>
        <end position="53"/>
    </location>
</feature>
<feature type="transmembrane region" description="Helical" evidence="2">
    <location>
        <begin position="77"/>
        <end position="98"/>
    </location>
</feature>
<feature type="transmembrane region" description="Helical" evidence="2">
    <location>
        <begin position="113"/>
        <end position="133"/>
    </location>
</feature>
<feature type="transmembrane region" description="Helical" evidence="2">
    <location>
        <begin position="178"/>
        <end position="198"/>
    </location>
</feature>
<feature type="transmembrane region" description="Helical" evidence="2">
    <location>
        <begin position="226"/>
        <end position="246"/>
    </location>
</feature>
<feature type="transmembrane region" description="Helical" evidence="2">
    <location>
        <begin position="288"/>
        <end position="308"/>
    </location>
</feature>
<feature type="transmembrane region" description="Helical" evidence="2">
    <location>
        <begin position="320"/>
        <end position="340"/>
    </location>
</feature>
<feature type="transmembrane region" description="Helical" evidence="2">
    <location>
        <begin position="347"/>
        <end position="367"/>
    </location>
</feature>
<feature type="binding site" description="axial binding residue" evidence="2">
    <location>
        <position position="83"/>
    </location>
    <ligand>
        <name>heme b</name>
        <dbReference type="ChEBI" id="CHEBI:60344"/>
        <label>b562</label>
    </ligand>
    <ligandPart>
        <name>Fe</name>
        <dbReference type="ChEBI" id="CHEBI:18248"/>
    </ligandPart>
</feature>
<feature type="binding site" description="axial binding residue" evidence="2">
    <location>
        <position position="97"/>
    </location>
    <ligand>
        <name>heme b</name>
        <dbReference type="ChEBI" id="CHEBI:60344"/>
        <label>b566</label>
    </ligand>
    <ligandPart>
        <name>Fe</name>
        <dbReference type="ChEBI" id="CHEBI:18248"/>
    </ligandPart>
</feature>
<feature type="binding site" description="axial binding residue" evidence="2">
    <location>
        <position position="182"/>
    </location>
    <ligand>
        <name>heme b</name>
        <dbReference type="ChEBI" id="CHEBI:60344"/>
        <label>b562</label>
    </ligand>
    <ligandPart>
        <name>Fe</name>
        <dbReference type="ChEBI" id="CHEBI:18248"/>
    </ligandPart>
</feature>
<feature type="binding site" description="axial binding residue" evidence="2">
    <location>
        <position position="196"/>
    </location>
    <ligand>
        <name>heme b</name>
        <dbReference type="ChEBI" id="CHEBI:60344"/>
        <label>b566</label>
    </ligand>
    <ligandPart>
        <name>Fe</name>
        <dbReference type="ChEBI" id="CHEBI:18248"/>
    </ligandPart>
</feature>
<feature type="binding site" evidence="2">
    <location>
        <position position="201"/>
    </location>
    <ligand>
        <name>a ubiquinone</name>
        <dbReference type="ChEBI" id="CHEBI:16389"/>
    </ligand>
</feature>
<sequence length="379" mass="42867">MTNIRKTHPLLKILNSSFVDLPAPSNLSAWWNFGSLLGVCLAXQILTGLFLAMHYTADTATAFNSVTHICRDVNYGWVLRYLHANGASMFFICLYLHVGRGLYYGSYLYSETWNIGILLLFAVMATAFMGYVLPWGQMSFWGATVITNLLSAIPYIGTELVQWIWGGFSVDKATLTRFFAFHFMLPFIVVALVMIHLLFLHETGSNNPTGIPSDPDLIPFHPYYTIKDILGFLVMLTILSTLVLFSPDLLEDPDNYTPANPLNTPPHIKPEWYFLFAYAILRSIPNKLGGVLALVLSILILVIVPTLHTSKQRSMMFRPLSQCLFWFLVATLLTLTWIGGQPVEYPYVIIGQVASILYFMILLVFMPLISIVENYLLKW</sequence>
<proteinExistence type="inferred from homology"/>
<gene>
    <name type="primary">MT-CYB</name>
    <name type="synonym">COB</name>
    <name type="synonym">CYTB</name>
    <name type="synonym">MTCYB</name>
</gene>
<organism>
    <name type="scientific">Platalina genovensium</name>
    <name type="common">Long-snouted bat</name>
    <dbReference type="NCBI Taxonomy" id="190511"/>
    <lineage>
        <taxon>Eukaryota</taxon>
        <taxon>Metazoa</taxon>
        <taxon>Chordata</taxon>
        <taxon>Craniata</taxon>
        <taxon>Vertebrata</taxon>
        <taxon>Euteleostomi</taxon>
        <taxon>Mammalia</taxon>
        <taxon>Eutheria</taxon>
        <taxon>Laurasiatheria</taxon>
        <taxon>Chiroptera</taxon>
        <taxon>Yangochiroptera</taxon>
        <taxon>Phyllostomidae</taxon>
        <taxon>Lonchophyllinae</taxon>
        <taxon>Platalina</taxon>
    </lineage>
</organism>
<geneLocation type="mitochondrion"/>
<accession>Q7YD12</accession>
<comment type="function">
    <text evidence="2">Component of the ubiquinol-cytochrome c reductase complex (complex III or cytochrome b-c1 complex) that is part of the mitochondrial respiratory chain. The b-c1 complex mediates electron transfer from ubiquinol to cytochrome c. Contributes to the generation of a proton gradient across the mitochondrial membrane that is then used for ATP synthesis.</text>
</comment>
<comment type="cofactor">
    <cofactor evidence="2">
        <name>heme b</name>
        <dbReference type="ChEBI" id="CHEBI:60344"/>
    </cofactor>
    <text evidence="2">Binds 2 heme b groups non-covalently.</text>
</comment>
<comment type="subunit">
    <text evidence="2">The cytochrome bc1 complex contains 11 subunits: 3 respiratory subunits (MT-CYB, CYC1 and UQCRFS1), 2 core proteins (UQCRC1 and UQCRC2) and 6 low-molecular weight proteins (UQCRH/QCR6, UQCRB/QCR7, UQCRQ/QCR8, UQCR10/QCR9, UQCR11/QCR10 and a cleavage product of UQCRFS1). This cytochrome bc1 complex then forms a dimer.</text>
</comment>
<comment type="subcellular location">
    <subcellularLocation>
        <location evidence="2">Mitochondrion inner membrane</location>
        <topology evidence="2">Multi-pass membrane protein</topology>
    </subcellularLocation>
</comment>
<comment type="miscellaneous">
    <text evidence="1">Heme 1 (or BL or b562) is low-potential and absorbs at about 562 nm, and heme 2 (or BH or b566) is high-potential and absorbs at about 566 nm.</text>
</comment>
<comment type="similarity">
    <text evidence="3 4">Belongs to the cytochrome b family.</text>
</comment>
<comment type="caution">
    <text evidence="2">The full-length protein contains only eight transmembrane helices, not nine as predicted by bioinformatics tools.</text>
</comment>